<name>QUEC_PYRFU</name>
<accession>Q8U4N3</accession>
<organism>
    <name type="scientific">Pyrococcus furiosus (strain ATCC 43587 / DSM 3638 / JCM 8422 / Vc1)</name>
    <dbReference type="NCBI Taxonomy" id="186497"/>
    <lineage>
        <taxon>Archaea</taxon>
        <taxon>Methanobacteriati</taxon>
        <taxon>Methanobacteriota</taxon>
        <taxon>Thermococci</taxon>
        <taxon>Thermococcales</taxon>
        <taxon>Thermococcaceae</taxon>
        <taxon>Pyrococcus</taxon>
    </lineage>
</organism>
<protein>
    <recommendedName>
        <fullName evidence="1">7-cyano-7-deazaguanine synthase</fullName>
        <ecNumber evidence="1">6.3.4.20</ecNumber>
    </recommendedName>
    <alternativeName>
        <fullName evidence="1">7-cyano-7-carbaguanine synthase</fullName>
    </alternativeName>
    <alternativeName>
        <fullName evidence="1">Archaeosine biosynthesis protein QueC</fullName>
    </alternativeName>
    <alternativeName>
        <fullName evidence="1">PreQ(0) synthase</fullName>
    </alternativeName>
</protein>
<evidence type="ECO:0000255" key="1">
    <source>
        <dbReference type="HAMAP-Rule" id="MF_01633"/>
    </source>
</evidence>
<dbReference type="EC" id="6.3.4.20" evidence="1"/>
<dbReference type="EMBL" id="AE009950">
    <property type="protein sequence ID" value="AAL80172.1"/>
    <property type="molecule type" value="Genomic_DNA"/>
</dbReference>
<dbReference type="RefSeq" id="WP_011011160.1">
    <property type="nucleotide sequence ID" value="NZ_CP023154.1"/>
</dbReference>
<dbReference type="SMR" id="Q8U4N3"/>
<dbReference type="STRING" id="186497.PF0048"/>
<dbReference type="PaxDb" id="186497-PF0048"/>
<dbReference type="GeneID" id="41711835"/>
<dbReference type="KEGG" id="pfu:PF0048"/>
<dbReference type="PATRIC" id="fig|186497.12.peg.52"/>
<dbReference type="eggNOG" id="arCOG00039">
    <property type="taxonomic scope" value="Archaea"/>
</dbReference>
<dbReference type="HOGENOM" id="CLU_081854_1_1_2"/>
<dbReference type="OrthoDB" id="6532at2157"/>
<dbReference type="PhylomeDB" id="Q8U4N3"/>
<dbReference type="UniPathway" id="UPA00391"/>
<dbReference type="Proteomes" id="UP000001013">
    <property type="component" value="Chromosome"/>
</dbReference>
<dbReference type="GO" id="GO:0005524">
    <property type="term" value="F:ATP binding"/>
    <property type="evidence" value="ECO:0007669"/>
    <property type="project" value="UniProtKB-UniRule"/>
</dbReference>
<dbReference type="GO" id="GO:0016879">
    <property type="term" value="F:ligase activity, forming carbon-nitrogen bonds"/>
    <property type="evidence" value="ECO:0007669"/>
    <property type="project" value="UniProtKB-UniRule"/>
</dbReference>
<dbReference type="GO" id="GO:0008270">
    <property type="term" value="F:zinc ion binding"/>
    <property type="evidence" value="ECO:0007669"/>
    <property type="project" value="UniProtKB-UniRule"/>
</dbReference>
<dbReference type="CDD" id="cd01995">
    <property type="entry name" value="QueC-like"/>
    <property type="match status" value="1"/>
</dbReference>
<dbReference type="Gene3D" id="3.40.50.620">
    <property type="entry name" value="HUPs"/>
    <property type="match status" value="1"/>
</dbReference>
<dbReference type="HAMAP" id="MF_01633">
    <property type="entry name" value="QueC"/>
    <property type="match status" value="1"/>
</dbReference>
<dbReference type="InterPro" id="IPR018317">
    <property type="entry name" value="QueC"/>
</dbReference>
<dbReference type="InterPro" id="IPR014729">
    <property type="entry name" value="Rossmann-like_a/b/a_fold"/>
</dbReference>
<dbReference type="NCBIfam" id="TIGR00364">
    <property type="entry name" value="7-cyano-7-deazaguanine synthase QueC"/>
    <property type="match status" value="1"/>
</dbReference>
<dbReference type="PANTHER" id="PTHR42914">
    <property type="entry name" value="7-CYANO-7-DEAZAGUANINE SYNTHASE"/>
    <property type="match status" value="1"/>
</dbReference>
<dbReference type="PANTHER" id="PTHR42914:SF1">
    <property type="entry name" value="7-CYANO-7-DEAZAGUANINE SYNTHASE"/>
    <property type="match status" value="1"/>
</dbReference>
<dbReference type="Pfam" id="PF06508">
    <property type="entry name" value="QueC"/>
    <property type="match status" value="1"/>
</dbReference>
<dbReference type="PIRSF" id="PIRSF006293">
    <property type="entry name" value="ExsB"/>
    <property type="match status" value="1"/>
</dbReference>
<dbReference type="SUPFAM" id="SSF52402">
    <property type="entry name" value="Adenine nucleotide alpha hydrolases-like"/>
    <property type="match status" value="1"/>
</dbReference>
<proteinExistence type="inferred from homology"/>
<keyword id="KW-0067">ATP-binding</keyword>
<keyword id="KW-0436">Ligase</keyword>
<keyword id="KW-0479">Metal-binding</keyword>
<keyword id="KW-0547">Nucleotide-binding</keyword>
<keyword id="KW-1185">Reference proteome</keyword>
<keyword id="KW-0862">Zinc</keyword>
<comment type="function">
    <text evidence="1">Catalyzes the ATP-dependent conversion of 7-carboxy-7-deazaguanine (CDG) to 7-cyano-7-deazaguanine (preQ(0)).</text>
</comment>
<comment type="catalytic activity">
    <reaction evidence="1">
        <text>7-carboxy-7-deazaguanine + NH4(+) + ATP = 7-cyano-7-deazaguanine + ADP + phosphate + H2O + H(+)</text>
        <dbReference type="Rhea" id="RHEA:27982"/>
        <dbReference type="ChEBI" id="CHEBI:15377"/>
        <dbReference type="ChEBI" id="CHEBI:15378"/>
        <dbReference type="ChEBI" id="CHEBI:28938"/>
        <dbReference type="ChEBI" id="CHEBI:30616"/>
        <dbReference type="ChEBI" id="CHEBI:43474"/>
        <dbReference type="ChEBI" id="CHEBI:45075"/>
        <dbReference type="ChEBI" id="CHEBI:61036"/>
        <dbReference type="ChEBI" id="CHEBI:456216"/>
        <dbReference type="EC" id="6.3.4.20"/>
    </reaction>
</comment>
<comment type="cofactor">
    <cofactor evidence="1">
        <name>Zn(2+)</name>
        <dbReference type="ChEBI" id="CHEBI:29105"/>
    </cofactor>
    <text evidence="1">Binds 1 zinc ion per subunit.</text>
</comment>
<comment type="pathway">
    <text evidence="1">Purine metabolism; 7-cyano-7-deazaguanine biosynthesis.</text>
</comment>
<comment type="similarity">
    <text evidence="1">Belongs to the QueC family.</text>
</comment>
<reference key="1">
    <citation type="journal article" date="1999" name="Genetics">
        <title>Divergence of the hyperthermophilic archaea Pyrococcus furiosus and P. horikoshii inferred from complete genomic sequences.</title>
        <authorList>
            <person name="Maeder D.L."/>
            <person name="Weiss R.B."/>
            <person name="Dunn D.M."/>
            <person name="Cherry J.L."/>
            <person name="Gonzalez J.M."/>
            <person name="DiRuggiero J."/>
            <person name="Robb F.T."/>
        </authorList>
    </citation>
    <scope>NUCLEOTIDE SEQUENCE [LARGE SCALE GENOMIC DNA]</scope>
    <source>
        <strain>ATCC 43587 / DSM 3638 / JCM 8422 / Vc1</strain>
    </source>
</reference>
<feature type="chain" id="PRO_0000246986" description="7-cyano-7-deazaguanine synthase">
    <location>
        <begin position="1"/>
        <end position="240"/>
    </location>
</feature>
<feature type="binding site" evidence="1">
    <location>
        <begin position="9"/>
        <end position="19"/>
    </location>
    <ligand>
        <name>ATP</name>
        <dbReference type="ChEBI" id="CHEBI:30616"/>
    </ligand>
</feature>
<feature type="binding site" evidence="1">
    <location>
        <position position="195"/>
    </location>
    <ligand>
        <name>Zn(2+)</name>
        <dbReference type="ChEBI" id="CHEBI:29105"/>
    </ligand>
</feature>
<feature type="binding site" evidence="1">
    <location>
        <position position="210"/>
    </location>
    <ligand>
        <name>Zn(2+)</name>
        <dbReference type="ChEBI" id="CHEBI:29105"/>
    </ligand>
</feature>
<feature type="binding site" evidence="1">
    <location>
        <position position="213"/>
    </location>
    <ligand>
        <name>Zn(2+)</name>
        <dbReference type="ChEBI" id="CHEBI:29105"/>
    </ligand>
</feature>
<feature type="binding site" evidence="1">
    <location>
        <position position="216"/>
    </location>
    <ligand>
        <name>Zn(2+)</name>
        <dbReference type="ChEBI" id="CHEBI:29105"/>
    </ligand>
</feature>
<gene>
    <name evidence="1" type="primary">queC</name>
    <name type="ordered locus">PF0048</name>
</gene>
<sequence>MKRRAVVLFSGGLDSTACLYWAKKQYDEVIMLTVNYGSNEERVTNKVAEYFSKELDVRLKIVKLDFLKEFSEIRGSSLVGGEVPRVTAEELEDIEKASETARSVWIPARNLVLISVAASLLDALGGGDIIVGFNAEEATTFPDNSREFVEKLNEALRFATLNPVKVVAPLIDLDKRGIAKLLKELNAKYEYSNSCYNPKGFTEDGRPIHCGECESCVRRHKGLIEGIGEDKTVYAITPRI</sequence>